<sequence>MAKQLSTARKFKMITGKDLFQQQKAMDTELKKEDGEITDLMEFVQYGLYLALFQDNIVKAKSDFSDFRSSFEFDTDGKGLKELVELWQKEI</sequence>
<reference key="1">
    <citation type="journal article" date="1997" name="Mol. Microbiol.">
        <title>Analysis of the DNA sequence, gene expression, origin of replication and modular structure of the Lactococcus lactis lytic bacteriophage sk1.</title>
        <authorList>
            <person name="Chandry P.S."/>
            <person name="Moore S.C."/>
            <person name="Boyce J.D."/>
            <person name="Davidson B.E."/>
            <person name="Hillier A.J."/>
        </authorList>
    </citation>
    <scope>NUCLEOTIDE SEQUENCE [LARGE SCALE GENOMIC DNA]</scope>
</reference>
<protein>
    <recommendedName>
        <fullName evidence="1">Chaperone protein gp12</fullName>
    </recommendedName>
    <alternativeName>
        <fullName evidence="2">Gene product 12</fullName>
        <shortName evidence="2">gp12</shortName>
    </alternativeName>
    <alternativeName>
        <fullName evidence="1">Probable chaperone protein gp12</fullName>
    </alternativeName>
</protein>
<organismHost>
    <name type="scientific">Lactococcus lactis</name>
    <dbReference type="NCBI Taxonomy" id="1358"/>
</organismHost>
<organism>
    <name type="scientific">Lactococcus phage SK1</name>
    <name type="common">Lactococcus lactis bacteriophage SK1</name>
    <dbReference type="NCBI Taxonomy" id="2905675"/>
    <lineage>
        <taxon>Viruses</taxon>
        <taxon>Duplodnaviria</taxon>
        <taxon>Heunggongvirae</taxon>
        <taxon>Uroviricota</taxon>
        <taxon>Caudoviricetes</taxon>
        <taxon>Skunavirus</taxon>
        <taxon>Skunavirus sk1</taxon>
    </lineage>
</organism>
<proteinExistence type="inferred from homology"/>
<keyword id="KW-0426">Late protein</keyword>
<keyword id="KW-1185">Reference proteome</keyword>
<keyword id="KW-1188">Viral release from host cell</keyword>
<keyword id="KW-1245">Viral tail assembly</keyword>
<accession>O21880</accession>
<dbReference type="EMBL" id="AF011378">
    <property type="protein sequence ID" value="AAB70051.1"/>
    <property type="molecule type" value="Genomic_DNA"/>
</dbReference>
<dbReference type="RefSeq" id="NP_044958.1">
    <property type="nucleotide sequence ID" value="NC_001835.1"/>
</dbReference>
<dbReference type="SMR" id="O21880"/>
<dbReference type="GeneID" id="1261261"/>
<dbReference type="KEGG" id="vg:1261261"/>
<dbReference type="Proteomes" id="UP000000839">
    <property type="component" value="Genome"/>
</dbReference>
<dbReference type="GO" id="GO:0098003">
    <property type="term" value="P:viral tail assembly"/>
    <property type="evidence" value="ECO:0007669"/>
    <property type="project" value="UniProtKB-KW"/>
</dbReference>
<dbReference type="Gene3D" id="1.10.8.940">
    <property type="entry name" value="Uncharacterised protein, phage p2 ORF12"/>
    <property type="match status" value="1"/>
</dbReference>
<dbReference type="InterPro" id="IPR048803">
    <property type="entry name" value="Gp12"/>
</dbReference>
<dbReference type="InterPro" id="IPR043077">
    <property type="entry name" value="Gp12_sf"/>
</dbReference>
<dbReference type="Pfam" id="PF20962">
    <property type="entry name" value="Phage_p2_ORF12"/>
    <property type="match status" value="1"/>
</dbReference>
<feature type="chain" id="PRO_0000438263" description="Chaperone protein gp12">
    <location>
        <begin position="1"/>
        <end position="91"/>
    </location>
</feature>
<name>GP12_BPLSK</name>
<comment type="function">
    <text evidence="1">Probable chaperone for the tape measure protein. Might help to maintain the tape measure protein in solution during tail assembly.</text>
</comment>
<comment type="subunit">
    <text evidence="1">Homohexamer. Further self-assembles as a spiral.</text>
</comment>
<comment type="similarity">
    <text evidence="2">Belongs to the skunalikevirus chaperone protein gp12 family.</text>
</comment>
<evidence type="ECO:0000250" key="1">
    <source>
        <dbReference type="UniProtKB" id="D3WAD0"/>
    </source>
</evidence>
<evidence type="ECO:0000305" key="2"/>